<gene>
    <name evidence="1" type="primary">hisF</name>
    <name type="ordered locus">SAUSA300_2606</name>
</gene>
<keyword id="KW-0028">Amino-acid biosynthesis</keyword>
<keyword id="KW-0963">Cytoplasm</keyword>
<keyword id="KW-0368">Histidine biosynthesis</keyword>
<keyword id="KW-0456">Lyase</keyword>
<accession>Q2FDI8</accession>
<evidence type="ECO:0000255" key="1">
    <source>
        <dbReference type="HAMAP-Rule" id="MF_01013"/>
    </source>
</evidence>
<comment type="function">
    <text evidence="1">IGPS catalyzes the conversion of PRFAR and glutamine to IGP, AICAR and glutamate. The HisF subunit catalyzes the cyclization activity that produces IGP and AICAR from PRFAR using the ammonia provided by the HisH subunit.</text>
</comment>
<comment type="catalytic activity">
    <reaction evidence="1">
        <text>5-[(5-phospho-1-deoxy-D-ribulos-1-ylimino)methylamino]-1-(5-phospho-beta-D-ribosyl)imidazole-4-carboxamide + L-glutamine = D-erythro-1-(imidazol-4-yl)glycerol 3-phosphate + 5-amino-1-(5-phospho-beta-D-ribosyl)imidazole-4-carboxamide + L-glutamate + H(+)</text>
        <dbReference type="Rhea" id="RHEA:24793"/>
        <dbReference type="ChEBI" id="CHEBI:15378"/>
        <dbReference type="ChEBI" id="CHEBI:29985"/>
        <dbReference type="ChEBI" id="CHEBI:58278"/>
        <dbReference type="ChEBI" id="CHEBI:58359"/>
        <dbReference type="ChEBI" id="CHEBI:58475"/>
        <dbReference type="ChEBI" id="CHEBI:58525"/>
        <dbReference type="EC" id="4.3.2.10"/>
    </reaction>
</comment>
<comment type="pathway">
    <text evidence="1">Amino-acid biosynthesis; L-histidine biosynthesis; L-histidine from 5-phospho-alpha-D-ribose 1-diphosphate: step 5/9.</text>
</comment>
<comment type="subunit">
    <text evidence="1">Heterodimer of HisH and HisF.</text>
</comment>
<comment type="subcellular location">
    <subcellularLocation>
        <location evidence="1">Cytoplasm</location>
    </subcellularLocation>
</comment>
<comment type="similarity">
    <text evidence="1">Belongs to the HisA/HisF family.</text>
</comment>
<reference key="1">
    <citation type="journal article" date="2006" name="Lancet">
        <title>Complete genome sequence of USA300, an epidemic clone of community-acquired meticillin-resistant Staphylococcus aureus.</title>
        <authorList>
            <person name="Diep B.A."/>
            <person name="Gill S.R."/>
            <person name="Chang R.F."/>
            <person name="Phan T.H."/>
            <person name="Chen J.H."/>
            <person name="Davidson M.G."/>
            <person name="Lin F."/>
            <person name="Lin J."/>
            <person name="Carleton H.A."/>
            <person name="Mongodin E.F."/>
            <person name="Sensabaugh G.F."/>
            <person name="Perdreau-Remington F."/>
        </authorList>
    </citation>
    <scope>NUCLEOTIDE SEQUENCE [LARGE SCALE GENOMIC DNA]</scope>
    <source>
        <strain>USA300</strain>
    </source>
</reference>
<proteinExistence type="inferred from homology"/>
<sequence length="252" mass="27499">MIKKRIIPCLDVKDGRVVKGIQFKGLRDIGNPVDLAMYYNEAGADELVFLDISKTEEGHSLMLEVIEQTASRLFIPLTVGGGIQSLDDITQLLNHGADKVSLNSSALKNPQLIKQASDKFGRQCICIAIDSYYDPERKAHYCCTTGGKKMTNIKVYDWVQQVEQLGAGELLVTSMGHDGMKQGFDIEHLANIKSLVNIPIIASGGGGNAQHFVELFDQTDVSAGLAASILHDRETTVQSIKEVIRQGGIAVR</sequence>
<organism>
    <name type="scientific">Staphylococcus aureus (strain USA300)</name>
    <dbReference type="NCBI Taxonomy" id="367830"/>
    <lineage>
        <taxon>Bacteria</taxon>
        <taxon>Bacillati</taxon>
        <taxon>Bacillota</taxon>
        <taxon>Bacilli</taxon>
        <taxon>Bacillales</taxon>
        <taxon>Staphylococcaceae</taxon>
        <taxon>Staphylococcus</taxon>
    </lineage>
</organism>
<feature type="chain" id="PRO_1000063160" description="Imidazole glycerol phosphate synthase subunit HisF">
    <location>
        <begin position="1"/>
        <end position="252"/>
    </location>
</feature>
<feature type="active site" evidence="1">
    <location>
        <position position="11"/>
    </location>
</feature>
<feature type="active site" evidence="1">
    <location>
        <position position="130"/>
    </location>
</feature>
<name>HIS6_STAA3</name>
<dbReference type="EC" id="4.3.2.10" evidence="1"/>
<dbReference type="EMBL" id="CP000255">
    <property type="protein sequence ID" value="ABD21672.1"/>
    <property type="molecule type" value="Genomic_DNA"/>
</dbReference>
<dbReference type="SMR" id="Q2FDI8"/>
<dbReference type="KEGG" id="saa:SAUSA300_2606"/>
<dbReference type="HOGENOM" id="CLU_048577_4_0_9"/>
<dbReference type="OMA" id="WEVYIHG"/>
<dbReference type="UniPathway" id="UPA00031">
    <property type="reaction ID" value="UER00010"/>
</dbReference>
<dbReference type="Proteomes" id="UP000001939">
    <property type="component" value="Chromosome"/>
</dbReference>
<dbReference type="GO" id="GO:0005737">
    <property type="term" value="C:cytoplasm"/>
    <property type="evidence" value="ECO:0007669"/>
    <property type="project" value="UniProtKB-SubCell"/>
</dbReference>
<dbReference type="GO" id="GO:0000107">
    <property type="term" value="F:imidazoleglycerol-phosphate synthase activity"/>
    <property type="evidence" value="ECO:0007669"/>
    <property type="project" value="UniProtKB-UniRule"/>
</dbReference>
<dbReference type="GO" id="GO:0016829">
    <property type="term" value="F:lyase activity"/>
    <property type="evidence" value="ECO:0007669"/>
    <property type="project" value="UniProtKB-KW"/>
</dbReference>
<dbReference type="GO" id="GO:0000105">
    <property type="term" value="P:L-histidine biosynthetic process"/>
    <property type="evidence" value="ECO:0007669"/>
    <property type="project" value="UniProtKB-UniRule"/>
</dbReference>
<dbReference type="CDD" id="cd04731">
    <property type="entry name" value="HisF"/>
    <property type="match status" value="1"/>
</dbReference>
<dbReference type="FunFam" id="3.20.20.70:FF:000462">
    <property type="entry name" value="Multifunctional fusion protein"/>
    <property type="match status" value="1"/>
</dbReference>
<dbReference type="Gene3D" id="3.20.20.70">
    <property type="entry name" value="Aldolase class I"/>
    <property type="match status" value="1"/>
</dbReference>
<dbReference type="HAMAP" id="MF_01013">
    <property type="entry name" value="HisF"/>
    <property type="match status" value="1"/>
</dbReference>
<dbReference type="InterPro" id="IPR013785">
    <property type="entry name" value="Aldolase_TIM"/>
</dbReference>
<dbReference type="InterPro" id="IPR006062">
    <property type="entry name" value="His_biosynth"/>
</dbReference>
<dbReference type="InterPro" id="IPR004651">
    <property type="entry name" value="HisF"/>
</dbReference>
<dbReference type="InterPro" id="IPR050064">
    <property type="entry name" value="IGPS_HisA/HisF"/>
</dbReference>
<dbReference type="InterPro" id="IPR011060">
    <property type="entry name" value="RibuloseP-bd_barrel"/>
</dbReference>
<dbReference type="NCBIfam" id="TIGR00735">
    <property type="entry name" value="hisF"/>
    <property type="match status" value="1"/>
</dbReference>
<dbReference type="PANTHER" id="PTHR21235:SF2">
    <property type="entry name" value="IMIDAZOLE GLYCEROL PHOSPHATE SYNTHASE HISHF"/>
    <property type="match status" value="1"/>
</dbReference>
<dbReference type="PANTHER" id="PTHR21235">
    <property type="entry name" value="IMIDAZOLE GLYCEROL PHOSPHATE SYNTHASE SUBUNIT HISF/H IGP SYNTHASE SUBUNIT HISF/H"/>
    <property type="match status" value="1"/>
</dbReference>
<dbReference type="Pfam" id="PF00977">
    <property type="entry name" value="His_biosynth"/>
    <property type="match status" value="1"/>
</dbReference>
<dbReference type="SUPFAM" id="SSF51366">
    <property type="entry name" value="Ribulose-phoshate binding barrel"/>
    <property type="match status" value="1"/>
</dbReference>
<protein>
    <recommendedName>
        <fullName evidence="1">Imidazole glycerol phosphate synthase subunit HisF</fullName>
        <ecNumber evidence="1">4.3.2.10</ecNumber>
    </recommendedName>
    <alternativeName>
        <fullName evidence="1">IGP synthase cyclase subunit</fullName>
    </alternativeName>
    <alternativeName>
        <fullName evidence="1">IGP synthase subunit HisF</fullName>
    </alternativeName>
    <alternativeName>
        <fullName evidence="1">ImGP synthase subunit HisF</fullName>
        <shortName evidence="1">IGPS subunit HisF</shortName>
    </alternativeName>
</protein>